<keyword id="KW-0175">Coiled coil</keyword>
<keyword id="KW-1185">Reference proteome</keyword>
<feature type="chain" id="PRO_0000416681" description="UPF0612 protein C337.02c">
    <location>
        <begin position="1"/>
        <end position="305"/>
    </location>
</feature>
<feature type="coiled-coil region" evidence="1">
    <location>
        <begin position="27"/>
        <end position="63"/>
    </location>
</feature>
<feature type="coiled-coil region" evidence="1">
    <location>
        <begin position="120"/>
        <end position="207"/>
    </location>
</feature>
<reference key="1">
    <citation type="journal article" date="2002" name="Nature">
        <title>The genome sequence of Schizosaccharomyces pombe.</title>
        <authorList>
            <person name="Wood V."/>
            <person name="Gwilliam R."/>
            <person name="Rajandream M.A."/>
            <person name="Lyne M.H."/>
            <person name="Lyne R."/>
            <person name="Stewart A."/>
            <person name="Sgouros J.G."/>
            <person name="Peat N."/>
            <person name="Hayles J."/>
            <person name="Baker S.G."/>
            <person name="Basham D."/>
            <person name="Bowman S."/>
            <person name="Brooks K."/>
            <person name="Brown D."/>
            <person name="Brown S."/>
            <person name="Chillingworth T."/>
            <person name="Churcher C.M."/>
            <person name="Collins M."/>
            <person name="Connor R."/>
            <person name="Cronin A."/>
            <person name="Davis P."/>
            <person name="Feltwell T."/>
            <person name="Fraser A."/>
            <person name="Gentles S."/>
            <person name="Goble A."/>
            <person name="Hamlin N."/>
            <person name="Harris D.E."/>
            <person name="Hidalgo J."/>
            <person name="Hodgson G."/>
            <person name="Holroyd S."/>
            <person name="Hornsby T."/>
            <person name="Howarth S."/>
            <person name="Huckle E.J."/>
            <person name="Hunt S."/>
            <person name="Jagels K."/>
            <person name="James K.D."/>
            <person name="Jones L."/>
            <person name="Jones M."/>
            <person name="Leather S."/>
            <person name="McDonald S."/>
            <person name="McLean J."/>
            <person name="Mooney P."/>
            <person name="Moule S."/>
            <person name="Mungall K.L."/>
            <person name="Murphy L.D."/>
            <person name="Niblett D."/>
            <person name="Odell C."/>
            <person name="Oliver K."/>
            <person name="O'Neil S."/>
            <person name="Pearson D."/>
            <person name="Quail M.A."/>
            <person name="Rabbinowitsch E."/>
            <person name="Rutherford K.M."/>
            <person name="Rutter S."/>
            <person name="Saunders D."/>
            <person name="Seeger K."/>
            <person name="Sharp S."/>
            <person name="Skelton J."/>
            <person name="Simmonds M.N."/>
            <person name="Squares R."/>
            <person name="Squares S."/>
            <person name="Stevens K."/>
            <person name="Taylor K."/>
            <person name="Taylor R.G."/>
            <person name="Tivey A."/>
            <person name="Walsh S.V."/>
            <person name="Warren T."/>
            <person name="Whitehead S."/>
            <person name="Woodward J.R."/>
            <person name="Volckaert G."/>
            <person name="Aert R."/>
            <person name="Robben J."/>
            <person name="Grymonprez B."/>
            <person name="Weltjens I."/>
            <person name="Vanstreels E."/>
            <person name="Rieger M."/>
            <person name="Schaefer M."/>
            <person name="Mueller-Auer S."/>
            <person name="Gabel C."/>
            <person name="Fuchs M."/>
            <person name="Duesterhoeft A."/>
            <person name="Fritzc C."/>
            <person name="Holzer E."/>
            <person name="Moestl D."/>
            <person name="Hilbert H."/>
            <person name="Borzym K."/>
            <person name="Langer I."/>
            <person name="Beck A."/>
            <person name="Lehrach H."/>
            <person name="Reinhardt R."/>
            <person name="Pohl T.M."/>
            <person name="Eger P."/>
            <person name="Zimmermann W."/>
            <person name="Wedler H."/>
            <person name="Wambutt R."/>
            <person name="Purnelle B."/>
            <person name="Goffeau A."/>
            <person name="Cadieu E."/>
            <person name="Dreano S."/>
            <person name="Gloux S."/>
            <person name="Lelaure V."/>
            <person name="Mottier S."/>
            <person name="Galibert F."/>
            <person name="Aves S.J."/>
            <person name="Xiang Z."/>
            <person name="Hunt C."/>
            <person name="Moore K."/>
            <person name="Hurst S.M."/>
            <person name="Lucas M."/>
            <person name="Rochet M."/>
            <person name="Gaillardin C."/>
            <person name="Tallada V.A."/>
            <person name="Garzon A."/>
            <person name="Thode G."/>
            <person name="Daga R.R."/>
            <person name="Cruzado L."/>
            <person name="Jimenez J."/>
            <person name="Sanchez M."/>
            <person name="del Rey F."/>
            <person name="Benito J."/>
            <person name="Dominguez A."/>
            <person name="Revuelta J.L."/>
            <person name="Moreno S."/>
            <person name="Armstrong J."/>
            <person name="Forsburg S.L."/>
            <person name="Cerutti L."/>
            <person name="Lowe T."/>
            <person name="McCombie W.R."/>
            <person name="Paulsen I."/>
            <person name="Potashkin J."/>
            <person name="Shpakovski G.V."/>
            <person name="Ussery D."/>
            <person name="Barrell B.G."/>
            <person name="Nurse P."/>
        </authorList>
    </citation>
    <scope>NUCLEOTIDE SEQUENCE [LARGE SCALE GENOMIC DNA]</scope>
    <source>
        <strain>972 / ATCC 24843</strain>
    </source>
</reference>
<reference key="2">
    <citation type="journal article" date="2011" name="Science">
        <title>Comparative functional genomics of the fission yeasts.</title>
        <authorList>
            <person name="Rhind N."/>
            <person name="Chen Z."/>
            <person name="Yassour M."/>
            <person name="Thompson D.A."/>
            <person name="Haas B.J."/>
            <person name="Habib N."/>
            <person name="Wapinski I."/>
            <person name="Roy S."/>
            <person name="Lin M.F."/>
            <person name="Heiman D.I."/>
            <person name="Young S.K."/>
            <person name="Furuya K."/>
            <person name="Guo Y."/>
            <person name="Pidoux A."/>
            <person name="Chen H.M."/>
            <person name="Robbertse B."/>
            <person name="Goldberg J.M."/>
            <person name="Aoki K."/>
            <person name="Bayne E.H."/>
            <person name="Berlin A.M."/>
            <person name="Desjardins C.A."/>
            <person name="Dobbs E."/>
            <person name="Dukaj L."/>
            <person name="Fan L."/>
            <person name="FitzGerald M.G."/>
            <person name="French C."/>
            <person name="Gujja S."/>
            <person name="Hansen K."/>
            <person name="Keifenheim D."/>
            <person name="Levin J.Z."/>
            <person name="Mosher R.A."/>
            <person name="Mueller C.A."/>
            <person name="Pfiffner J."/>
            <person name="Priest M."/>
            <person name="Russ C."/>
            <person name="Smialowska A."/>
            <person name="Swoboda P."/>
            <person name="Sykes S.M."/>
            <person name="Vaughn M."/>
            <person name="Vengrova S."/>
            <person name="Yoder R."/>
            <person name="Zeng Q."/>
            <person name="Allshire R."/>
            <person name="Baulcombe D."/>
            <person name="Birren B.W."/>
            <person name="Brown W."/>
            <person name="Ekwall K."/>
            <person name="Kellis M."/>
            <person name="Leatherwood J."/>
            <person name="Levin H."/>
            <person name="Margalit H."/>
            <person name="Martienssen R."/>
            <person name="Nieduszynski C.A."/>
            <person name="Spatafora J.W."/>
            <person name="Friedman N."/>
            <person name="Dalgaard J.Z."/>
            <person name="Baumann P."/>
            <person name="Niki H."/>
            <person name="Regev A."/>
            <person name="Nusbaum C."/>
        </authorList>
    </citation>
    <scope>REVISION OF GENE MODEL</scope>
</reference>
<gene>
    <name type="ORF">SPBC337.02c</name>
</gene>
<protein>
    <recommendedName>
        <fullName>UPF0612 protein C337.02c</fullName>
    </recommendedName>
</protein>
<proteinExistence type="inferred from homology"/>
<dbReference type="EMBL" id="CU329671">
    <property type="protein sequence ID" value="CAO77661.2"/>
    <property type="molecule type" value="Genomic_DNA"/>
</dbReference>
<dbReference type="RefSeq" id="XP_004001704.1">
    <property type="nucleotide sequence ID" value="XM_004001655.1"/>
</dbReference>
<dbReference type="SMR" id="G2TRS9"/>
<dbReference type="BioGRID" id="280351">
    <property type="interactions" value="1"/>
</dbReference>
<dbReference type="STRING" id="284812.G2TRS9"/>
<dbReference type="iPTMnet" id="G2TRS9"/>
<dbReference type="PaxDb" id="4896-SPBC337.02c.1"/>
<dbReference type="EnsemblFungi" id="SPBC337.02c.1">
    <property type="protein sequence ID" value="SPBC337.02c.1:pep"/>
    <property type="gene ID" value="SPBC337.02c"/>
</dbReference>
<dbReference type="PomBase" id="SPBC337.02c"/>
<dbReference type="VEuPathDB" id="FungiDB:SPBC337.02c"/>
<dbReference type="eggNOG" id="ENOG502QQXV">
    <property type="taxonomic scope" value="Eukaryota"/>
</dbReference>
<dbReference type="HOGENOM" id="CLU_062677_0_0_1"/>
<dbReference type="InParanoid" id="G2TRS9"/>
<dbReference type="OMA" id="TRFNGME"/>
<dbReference type="PRO" id="PR:G2TRS9"/>
<dbReference type="Proteomes" id="UP000002485">
    <property type="component" value="Chromosome II"/>
</dbReference>
<dbReference type="Gene3D" id="3.90.20.10">
    <property type="match status" value="1"/>
</dbReference>
<dbReference type="InterPro" id="IPR013902">
    <property type="entry name" value="Mug135-like_C"/>
</dbReference>
<dbReference type="Pfam" id="PF08593">
    <property type="entry name" value="Mug135_C"/>
    <property type="match status" value="1"/>
</dbReference>
<dbReference type="SUPFAM" id="SSF57997">
    <property type="entry name" value="Tropomyosin"/>
    <property type="match status" value="1"/>
</dbReference>
<comment type="similarity">
    <text evidence="2">Belongs to the UPF0612 family.</text>
</comment>
<name>YBJ2_SCHPO</name>
<evidence type="ECO:0000255" key="1"/>
<evidence type="ECO:0000305" key="2"/>
<accession>G2TRS9</accession>
<organism>
    <name type="scientific">Schizosaccharomyces pombe (strain 972 / ATCC 24843)</name>
    <name type="common">Fission yeast</name>
    <dbReference type="NCBI Taxonomy" id="284812"/>
    <lineage>
        <taxon>Eukaryota</taxon>
        <taxon>Fungi</taxon>
        <taxon>Dikarya</taxon>
        <taxon>Ascomycota</taxon>
        <taxon>Taphrinomycotina</taxon>
        <taxon>Schizosaccharomycetes</taxon>
        <taxon>Schizosaccharomycetales</taxon>
        <taxon>Schizosaccharomycetaceae</taxon>
        <taxon>Schizosaccharomyces</taxon>
    </lineage>
</organism>
<sequence length="305" mass="36000">MMSNENFDNDYNLPPPNDSAEDLKIFIERYERSVDSTLLEIDENKREALEKNILRKDRKMKYEIECNERLQGWKKLAIEREISEEQSGEVQFPRWIDEWANTKLGGIFERIFSKMDSMQNDMNSRFDAMQNEMTSMKGEMAEMKVEMVEMKRETIRLNTRIDLLEQKTEARFQSIEQRFNSIDQRFDSMEQRLDSMDQKMETIDARSCRSIMLTRKLENATRSDQGYLASPVPFLNGNEPVSSGLPPIERVEDIDELSKEQCVQYLKGYGITFSPAETIKLKKRLRDTVGLWSKASTEYEFHQFH</sequence>